<comment type="function">
    <text evidence="2">Component of the cytochrome c oxidase, the last enzyme in the mitochondrial electron transport chain which drives oxidative phosphorylation. The respiratory chain contains 3 multisubunit complexes succinate dehydrogenase (complex II, CII), ubiquinol-cytochrome c oxidoreductase (cytochrome b-c1 complex, complex III, CIII) and cytochrome c oxidase (complex IV, CIV), that cooperate to transfer electrons derived from NADH and succinate to molecular oxygen, creating an electrochemical gradient over the inner membrane that drives transmembrane transport and the ATP synthase. Cytochrome c oxidase is the component of the respiratory chain that catalyzes the reduction of oxygen to water. Electrons originating from reduced cytochrome c in the intermembrane space (IMS) are transferred via the dinuclear copper A center (CU(A)) of subunit 2 and heme A of subunit 1 to the active site in subunit 1, a binuclear center (BNC) formed by heme A3 and copper B (CU(B)). The BNC reduces molecular oxygen to 2 water molecules using 4 electrons from cytochrome c in the IMS and 4 protons from the mitochondrial matrix.</text>
</comment>
<comment type="pathway">
    <text evidence="2">Energy metabolism; oxidative phosphorylation.</text>
</comment>
<comment type="subunit">
    <text evidence="1 4">Component of the cytochrome c oxidase (complex IV, CIV), a multisubunit enzyme composed of 14 subunits. The complex is composed of a catalytic core of 3 subunits MT-CO1, MT-CO2 and MT-CO3, encoded in the mitochondrial DNA, and 11 supernumerary subunits COX4I, COX5A, COX5B, COX6A, COX6B, COX6C, COX7A, COX7B, COX7C, COX8 and NDUFA4, which are encoded in the nuclear genome. The complex exists as a monomer or a dimer and forms supercomplexes (SCs) in the inner mitochondrial membrane with NADH-ubiquinone oxidoreductase (complex I, CI) and ubiquinol-cytochrome c oxidoreductase (cytochrome b-c1 complex, complex III, CIII), resulting in different assemblies (supercomplex SCI(1)III(2)IV(1) and megacomplex MCI(2)III(2)IV(2)) (By similarity). Interacts with AFG1L (By similarity). Interacts with RAB5IF (By similarity).</text>
</comment>
<comment type="subcellular location">
    <subcellularLocation>
        <location evidence="1">Mitochondrion inner membrane</location>
        <topology evidence="1">Peripheral membrane protein</topology>
        <orientation evidence="1">Matrix side</orientation>
    </subcellularLocation>
</comment>
<comment type="PTM">
    <text evidence="4">In response to mitochondrial stress, the precursor protein is ubiquitinated by the SIFI complex in the cytoplasm before mitochondrial import, leading to its degradation. Within the SIFI complex, UBR4 initiates ubiquitin chain that are further elongated or branched by KCMF1.</text>
</comment>
<comment type="similarity">
    <text evidence="5">Belongs to the cytochrome c oxidase subunit 5A family.</text>
</comment>
<proteinExistence type="evidence at transcript level"/>
<feature type="transit peptide" description="Mitochondrion" evidence="1">
    <location>
        <begin position="1"/>
        <end position="41"/>
    </location>
</feature>
<feature type="chain" id="PRO_0000355986" description="Cytochrome c oxidase subunit 5A, mitochondrial">
    <location>
        <begin position="42"/>
        <end position="150"/>
    </location>
</feature>
<feature type="short sequence motif" description="SIFI-degron" evidence="4">
    <location>
        <begin position="2"/>
        <end position="17"/>
    </location>
</feature>
<feature type="modified residue" description="N6-acetyllysine" evidence="3">
    <location>
        <position position="87"/>
    </location>
</feature>
<feature type="modified residue" description="N6-acetyllysine" evidence="3">
    <location>
        <position position="113"/>
    </location>
</feature>
<feature type="modified residue" description="Phosphothreonine" evidence="4">
    <location>
        <position position="141"/>
    </location>
</feature>
<evidence type="ECO:0000250" key="1">
    <source>
        <dbReference type="UniProtKB" id="P00426"/>
    </source>
</evidence>
<evidence type="ECO:0000250" key="2">
    <source>
        <dbReference type="UniProtKB" id="P00427"/>
    </source>
</evidence>
<evidence type="ECO:0000250" key="3">
    <source>
        <dbReference type="UniProtKB" id="P12787"/>
    </source>
</evidence>
<evidence type="ECO:0000250" key="4">
    <source>
        <dbReference type="UniProtKB" id="P20674"/>
    </source>
</evidence>
<evidence type="ECO:0000305" key="5"/>
<name>COX5A_PANPA</name>
<accession>B0VYX2</accession>
<keyword id="KW-0007">Acetylation</keyword>
<keyword id="KW-0349">Heme</keyword>
<keyword id="KW-0408">Iron</keyword>
<keyword id="KW-0472">Membrane</keyword>
<keyword id="KW-0479">Metal-binding</keyword>
<keyword id="KW-0496">Mitochondrion</keyword>
<keyword id="KW-0999">Mitochondrion inner membrane</keyword>
<keyword id="KW-0597">Phosphoprotein</keyword>
<keyword id="KW-1185">Reference proteome</keyword>
<keyword id="KW-0809">Transit peptide</keyword>
<keyword id="KW-0832">Ubl conjugation</keyword>
<gene>
    <name type="primary">COX5A</name>
</gene>
<protein>
    <recommendedName>
        <fullName>Cytochrome c oxidase subunit 5A, mitochondrial</fullName>
    </recommendedName>
    <alternativeName>
        <fullName>Cytochrome c oxidase polypeptide Va</fullName>
    </alternativeName>
</protein>
<dbReference type="EMBL" id="DQ987239">
    <property type="protein sequence ID" value="ABK92286.1"/>
    <property type="molecule type" value="mRNA"/>
</dbReference>
<dbReference type="RefSeq" id="NP_001288693.1">
    <property type="nucleotide sequence ID" value="NM_001301764.1"/>
</dbReference>
<dbReference type="STRING" id="9597.ENSPPAP00000011162"/>
<dbReference type="GeneID" id="100988094"/>
<dbReference type="KEGG" id="pps:100988094"/>
<dbReference type="eggNOG" id="KOG4077">
    <property type="taxonomic scope" value="Eukaryota"/>
</dbReference>
<dbReference type="UniPathway" id="UPA00705"/>
<dbReference type="Proteomes" id="UP000240080">
    <property type="component" value="Unplaced"/>
</dbReference>
<dbReference type="GO" id="GO:0005743">
    <property type="term" value="C:mitochondrial inner membrane"/>
    <property type="evidence" value="ECO:0007669"/>
    <property type="project" value="UniProtKB-SubCell"/>
</dbReference>
<dbReference type="GO" id="GO:0045277">
    <property type="term" value="C:respiratory chain complex IV"/>
    <property type="evidence" value="ECO:0007669"/>
    <property type="project" value="InterPro"/>
</dbReference>
<dbReference type="GO" id="GO:0046872">
    <property type="term" value="F:metal ion binding"/>
    <property type="evidence" value="ECO:0007669"/>
    <property type="project" value="UniProtKB-KW"/>
</dbReference>
<dbReference type="GO" id="GO:0006123">
    <property type="term" value="P:mitochondrial electron transport, cytochrome c to oxygen"/>
    <property type="evidence" value="ECO:0007669"/>
    <property type="project" value="InterPro"/>
</dbReference>
<dbReference type="CDD" id="cd00923">
    <property type="entry name" value="Cyt_c_Oxidase_Va"/>
    <property type="match status" value="1"/>
</dbReference>
<dbReference type="FunFam" id="1.25.40.40:FF:000002">
    <property type="entry name" value="cytochrome c oxidase subunit 5A, mitochondrial"/>
    <property type="match status" value="1"/>
</dbReference>
<dbReference type="Gene3D" id="1.25.40.40">
    <property type="entry name" value="Cytochrome c oxidase, subunit Va/VI"/>
    <property type="match status" value="1"/>
</dbReference>
<dbReference type="InterPro" id="IPR003204">
    <property type="entry name" value="Cyt_c_oxidase_su5A/6"/>
</dbReference>
<dbReference type="InterPro" id="IPR036545">
    <property type="entry name" value="Cyt_c_oxidase_su5A/6_sf"/>
</dbReference>
<dbReference type="PANTHER" id="PTHR14200">
    <property type="entry name" value="CYTOCHROME C OXIDASE POLYPEPTIDE"/>
    <property type="match status" value="1"/>
</dbReference>
<dbReference type="PANTHER" id="PTHR14200:SF16">
    <property type="entry name" value="CYTOCHROME C OXIDASE SUBUNIT 5A, MITOCHONDRIAL"/>
    <property type="match status" value="1"/>
</dbReference>
<dbReference type="Pfam" id="PF02284">
    <property type="entry name" value="COX5A"/>
    <property type="match status" value="1"/>
</dbReference>
<dbReference type="SUPFAM" id="SSF48479">
    <property type="entry name" value="Cytochrome c oxidase subunit E"/>
    <property type="match status" value="1"/>
</dbReference>
<sequence length="150" mass="16596">MLGAALRRCAVAATTRAGPRGLLHSARTPGPAAAIQSVRCXSHGSQETDEEFDARWVTYFNKPDIDAWELRKGINTLVTYDMVPEPKIIDAALRACRRLNDFASTVRILEAVKDKAGPHKEIYPYVIQELRPTLNELGISTPEELGLDKV</sequence>
<reference key="1">
    <citation type="journal article" date="2008" name="BMC Evol. Biol.">
        <title>Molecular evolution of the cytochrome c oxidase subunit 5A gene in primates.</title>
        <authorList>
            <person name="Uddin M."/>
            <person name="Opazo J.C."/>
            <person name="Wildman D.E."/>
            <person name="Sherwood C.C."/>
            <person name="Hof P.R."/>
            <person name="Goodman M."/>
            <person name="Grossman L.I."/>
        </authorList>
    </citation>
    <scope>NUCLEOTIDE SEQUENCE [MRNA]</scope>
</reference>
<organism>
    <name type="scientific">Pan paniscus</name>
    <name type="common">Pygmy chimpanzee</name>
    <name type="synonym">Bonobo</name>
    <dbReference type="NCBI Taxonomy" id="9597"/>
    <lineage>
        <taxon>Eukaryota</taxon>
        <taxon>Metazoa</taxon>
        <taxon>Chordata</taxon>
        <taxon>Craniata</taxon>
        <taxon>Vertebrata</taxon>
        <taxon>Euteleostomi</taxon>
        <taxon>Mammalia</taxon>
        <taxon>Eutheria</taxon>
        <taxon>Euarchontoglires</taxon>
        <taxon>Primates</taxon>
        <taxon>Haplorrhini</taxon>
        <taxon>Catarrhini</taxon>
        <taxon>Hominidae</taxon>
        <taxon>Pan</taxon>
    </lineage>
</organism>